<organism>
    <name type="scientific">Arabidopsis thaliana</name>
    <name type="common">Mouse-ear cress</name>
    <dbReference type="NCBI Taxonomy" id="3702"/>
    <lineage>
        <taxon>Eukaryota</taxon>
        <taxon>Viridiplantae</taxon>
        <taxon>Streptophyta</taxon>
        <taxon>Embryophyta</taxon>
        <taxon>Tracheophyta</taxon>
        <taxon>Spermatophyta</taxon>
        <taxon>Magnoliopsida</taxon>
        <taxon>eudicotyledons</taxon>
        <taxon>Gunneridae</taxon>
        <taxon>Pentapetalae</taxon>
        <taxon>rosids</taxon>
        <taxon>malvids</taxon>
        <taxon>Brassicales</taxon>
        <taxon>Brassicaceae</taxon>
        <taxon>Camelineae</taxon>
        <taxon>Arabidopsis</taxon>
    </lineage>
</organism>
<name>ALA11_ARATH</name>
<proteinExistence type="evidence at transcript level"/>
<sequence>MTKCRRRRLHLSNIYAFKGRKSNFQEDHSHIGGPGFSRVVYCNEPNSPAAERRNYVGNYVRSTKYTLASFIPKSLFEQFRRVANFYFLVTGVLSLTALSPYSPISALLPLTFVIAASMVKEAIEDWGRKKQDIEMNNRKVKVHDGNGIFRREGWRDLKVGNIVRVEKDEFFPADLLLLSSSYEDSICYVETMNLDGETNLKVKQGLEATSSALHEDSDFKELKAVVKCEDPNADLYTFVGTLHFEEQRLPLSITQLLLRDSKLRNTEYIYGVVVFTGHDTKVIQNSTDPPSKRSRIERKMDKIIYLMFGVVFLMSFIGSIVFGIETREDRVRNGGRTERWYLRPDNADIFFDPDRAPMAAVYHFFTAVMLYSYFIPISLYVSIEIVKVLQSLFINNDILMYYEENDKPAHARTSNLNEELGMVDTILSDKTGTLTCNSMEFIKCSIAGTAYGRGITEVERSMAMRSNGSSLVGDDLDVVVDQSGPKIKGFNFLDERVMKGNWVKQRDAAVLQKFFRLLAVCHTAIPETDEATGSVSYEAESPDEAAFVVAAREFGFEFFSRTQNGISFRELDLASGKTVERVYRLLNVLEFNSARKRMSVIVRDEDGRLLLLSKGADNVMFERLAKNGRKFEEKTREHVNEYADAGLRTLILAYREVDENEYIEFSKNFNEAKNSVTADRESLIDEITEQMERDLILLGATAVEDKLQNGVPDCIDKLAQAGIKIWVLTGDKMETAINIGFACSLLRQEMKQIIINLETPHIKALEKAGEKDAIEHASRESVVNQMEEGKALLTASSSASSHEAFALIIDGKSLTYALEDDFKKKFLDLATGCASVICCRSSPKQKALVTRLVKSGTGKTTLAIGDGANDVGMLQEADIGVGISGVEGMQAVMSSDIAIAQFRYLERLLLVHGHWCYSRISSMICYFFYKNITFGVTVFLYEAYTSFSAQPAYNDWFLSLFNVFFSSLPVIALGVFDQDVSARYCYKFPLLYQEGVQNLLFSWKRIIGWMFNGVFTALAIFFLCKESLKHQLYNPNGKTAGREILGGTMYTCVVWVVNLQMALAISYFTWLQHIVIWGSVAFWYIFLMIYGAITPSFSTDAYKVFIEALAPAPSYWLTTLFVMFFALIPFFVFKSVQMRFFPGYHQMIQWIRYEGHSNDPEFVEMVRQRSIRPTTVGFTARRAASVRRSGRFHDQLNKNFIAF</sequence>
<protein>
    <recommendedName>
        <fullName evidence="3">Probable phospholipid-transporting ATPase 11</fullName>
        <shortName evidence="3">AtALA11</shortName>
        <ecNumber evidence="5">7.6.2.1</ecNumber>
    </recommendedName>
    <alternativeName>
        <fullName evidence="3">Aminophospholipid flippase 11</fullName>
    </alternativeName>
</protein>
<dbReference type="EC" id="7.6.2.1" evidence="5"/>
<dbReference type="EMBL" id="AC007357">
    <property type="protein sequence ID" value="AAD31074.1"/>
    <property type="molecule type" value="Genomic_DNA"/>
</dbReference>
<dbReference type="EMBL" id="CP002684">
    <property type="protein sequence ID" value="AEE28985.1"/>
    <property type="molecule type" value="Genomic_DNA"/>
</dbReference>
<dbReference type="EMBL" id="AY099862">
    <property type="protein sequence ID" value="AAM20713.1"/>
    <property type="molecule type" value="mRNA"/>
</dbReference>
<dbReference type="PIR" id="F86266">
    <property type="entry name" value="F86266"/>
</dbReference>
<dbReference type="SMR" id="Q9SAF5"/>
<dbReference type="BioGRID" id="23121">
    <property type="interactions" value="2"/>
</dbReference>
<dbReference type="FunCoup" id="Q9SAF5">
    <property type="interactions" value="692"/>
</dbReference>
<dbReference type="STRING" id="3702.Q9SAF5"/>
<dbReference type="GlyGen" id="Q9SAF5">
    <property type="glycosylation" value="1 site"/>
</dbReference>
<dbReference type="iPTMnet" id="Q9SAF5"/>
<dbReference type="PaxDb" id="3702-AT1G13210.1"/>
<dbReference type="ProteomicsDB" id="245044"/>
<dbReference type="EnsemblPlants" id="AT1G13210.1">
    <property type="protein sequence ID" value="AT1G13210.1"/>
    <property type="gene ID" value="AT1G13210"/>
</dbReference>
<dbReference type="GeneID" id="837881"/>
<dbReference type="Gramene" id="AT1G13210.1">
    <property type="protein sequence ID" value="AT1G13210.1"/>
    <property type="gene ID" value="AT1G13210"/>
</dbReference>
<dbReference type="KEGG" id="ath:AT1G13210"/>
<dbReference type="Araport" id="AT1G13210"/>
<dbReference type="TAIR" id="AT1G13210">
    <property type="gene designation" value="ACA.L"/>
</dbReference>
<dbReference type="eggNOG" id="KOG0206">
    <property type="taxonomic scope" value="Eukaryota"/>
</dbReference>
<dbReference type="HOGENOM" id="CLU_000846_5_2_1"/>
<dbReference type="InParanoid" id="Q9SAF5"/>
<dbReference type="OMA" id="FNKHKFF"/>
<dbReference type="PhylomeDB" id="Q9SAF5"/>
<dbReference type="BioCyc" id="ARA:AT1G13210-MONOMER"/>
<dbReference type="PRO" id="PR:Q9SAF5"/>
<dbReference type="Proteomes" id="UP000006548">
    <property type="component" value="Chromosome 1"/>
</dbReference>
<dbReference type="ExpressionAtlas" id="Q9SAF5">
    <property type="expression patterns" value="baseline and differential"/>
</dbReference>
<dbReference type="GO" id="GO:0016020">
    <property type="term" value="C:membrane"/>
    <property type="evidence" value="ECO:0007669"/>
    <property type="project" value="UniProtKB-SubCell"/>
</dbReference>
<dbReference type="GO" id="GO:0005524">
    <property type="term" value="F:ATP binding"/>
    <property type="evidence" value="ECO:0007669"/>
    <property type="project" value="UniProtKB-KW"/>
</dbReference>
<dbReference type="GO" id="GO:0016887">
    <property type="term" value="F:ATP hydrolysis activity"/>
    <property type="evidence" value="ECO:0007669"/>
    <property type="project" value="InterPro"/>
</dbReference>
<dbReference type="GO" id="GO:0140326">
    <property type="term" value="F:ATPase-coupled intramembrane lipid transporter activity"/>
    <property type="evidence" value="ECO:0007669"/>
    <property type="project" value="UniProtKB-EC"/>
</dbReference>
<dbReference type="GO" id="GO:0000287">
    <property type="term" value="F:magnesium ion binding"/>
    <property type="evidence" value="ECO:0007669"/>
    <property type="project" value="InterPro"/>
</dbReference>
<dbReference type="GO" id="GO:0015914">
    <property type="term" value="P:phospholipid transport"/>
    <property type="evidence" value="ECO:0007669"/>
    <property type="project" value="InterPro"/>
</dbReference>
<dbReference type="GO" id="GO:1901703">
    <property type="term" value="P:protein localization involved in auxin polar transport"/>
    <property type="evidence" value="ECO:0000316"/>
    <property type="project" value="TAIR"/>
</dbReference>
<dbReference type="CDD" id="cd02073">
    <property type="entry name" value="P-type_ATPase_APLT_Dnf-like"/>
    <property type="match status" value="1"/>
</dbReference>
<dbReference type="FunFam" id="2.70.150.10:FF:000023">
    <property type="entry name" value="Phospholipid-transporting ATPase"/>
    <property type="match status" value="1"/>
</dbReference>
<dbReference type="FunFam" id="3.40.1110.10:FF:000042">
    <property type="entry name" value="Phospholipid-transporting ATPase"/>
    <property type="match status" value="1"/>
</dbReference>
<dbReference type="FunFam" id="3.40.50.1000:FF:000014">
    <property type="entry name" value="Phospholipid-transporting ATPase"/>
    <property type="match status" value="1"/>
</dbReference>
<dbReference type="Gene3D" id="3.40.1110.10">
    <property type="entry name" value="Calcium-transporting ATPase, cytoplasmic domain N"/>
    <property type="match status" value="1"/>
</dbReference>
<dbReference type="Gene3D" id="2.70.150.10">
    <property type="entry name" value="Calcium-transporting ATPase, cytoplasmic transduction domain A"/>
    <property type="match status" value="1"/>
</dbReference>
<dbReference type="Gene3D" id="3.40.50.1000">
    <property type="entry name" value="HAD superfamily/HAD-like"/>
    <property type="match status" value="1"/>
</dbReference>
<dbReference type="InterPro" id="IPR023299">
    <property type="entry name" value="ATPase_P-typ_cyto_dom_N"/>
</dbReference>
<dbReference type="InterPro" id="IPR018303">
    <property type="entry name" value="ATPase_P-typ_P_site"/>
</dbReference>
<dbReference type="InterPro" id="IPR023298">
    <property type="entry name" value="ATPase_P-typ_TM_dom_sf"/>
</dbReference>
<dbReference type="InterPro" id="IPR008250">
    <property type="entry name" value="ATPase_P-typ_transduc_dom_A_sf"/>
</dbReference>
<dbReference type="InterPro" id="IPR036412">
    <property type="entry name" value="HAD-like_sf"/>
</dbReference>
<dbReference type="InterPro" id="IPR023214">
    <property type="entry name" value="HAD_sf"/>
</dbReference>
<dbReference type="InterPro" id="IPR006539">
    <property type="entry name" value="P-type_ATPase_IV"/>
</dbReference>
<dbReference type="InterPro" id="IPR032631">
    <property type="entry name" value="P-type_ATPase_N"/>
</dbReference>
<dbReference type="InterPro" id="IPR001757">
    <property type="entry name" value="P_typ_ATPase"/>
</dbReference>
<dbReference type="InterPro" id="IPR032630">
    <property type="entry name" value="P_typ_ATPase_c"/>
</dbReference>
<dbReference type="InterPro" id="IPR044492">
    <property type="entry name" value="P_typ_ATPase_HD_dom"/>
</dbReference>
<dbReference type="NCBIfam" id="TIGR01652">
    <property type="entry name" value="ATPase-Plipid"/>
    <property type="match status" value="1"/>
</dbReference>
<dbReference type="NCBIfam" id="TIGR01494">
    <property type="entry name" value="ATPase_P-type"/>
    <property type="match status" value="1"/>
</dbReference>
<dbReference type="PANTHER" id="PTHR24092:SF184">
    <property type="entry name" value="PHOSPHOLIPID-TRANSPORTING ATPASE 11-RELATED"/>
    <property type="match status" value="1"/>
</dbReference>
<dbReference type="PANTHER" id="PTHR24092">
    <property type="entry name" value="PROBABLE PHOSPHOLIPID-TRANSPORTING ATPASE"/>
    <property type="match status" value="1"/>
</dbReference>
<dbReference type="Pfam" id="PF13246">
    <property type="entry name" value="Cation_ATPase"/>
    <property type="match status" value="1"/>
</dbReference>
<dbReference type="Pfam" id="PF16212">
    <property type="entry name" value="PhoLip_ATPase_C"/>
    <property type="match status" value="1"/>
</dbReference>
<dbReference type="Pfam" id="PF16209">
    <property type="entry name" value="PhoLip_ATPase_N"/>
    <property type="match status" value="1"/>
</dbReference>
<dbReference type="PRINTS" id="PR00119">
    <property type="entry name" value="CATATPASE"/>
</dbReference>
<dbReference type="SFLD" id="SFLDG00002">
    <property type="entry name" value="C1.7:_P-type_atpase_like"/>
    <property type="match status" value="1"/>
</dbReference>
<dbReference type="SFLD" id="SFLDF00027">
    <property type="entry name" value="p-type_atpase"/>
    <property type="match status" value="1"/>
</dbReference>
<dbReference type="SUPFAM" id="SSF81653">
    <property type="entry name" value="Calcium ATPase, transduction domain A"/>
    <property type="match status" value="1"/>
</dbReference>
<dbReference type="SUPFAM" id="SSF81665">
    <property type="entry name" value="Calcium ATPase, transmembrane domain M"/>
    <property type="match status" value="1"/>
</dbReference>
<dbReference type="SUPFAM" id="SSF56784">
    <property type="entry name" value="HAD-like"/>
    <property type="match status" value="1"/>
</dbReference>
<dbReference type="SUPFAM" id="SSF81660">
    <property type="entry name" value="Metal cation-transporting ATPase, ATP-binding domain N"/>
    <property type="match status" value="1"/>
</dbReference>
<dbReference type="PROSITE" id="PS00154">
    <property type="entry name" value="ATPASE_E1_E2"/>
    <property type="match status" value="1"/>
</dbReference>
<feature type="chain" id="PRO_0000046395" description="Probable phospholipid-transporting ATPase 11">
    <location>
        <begin position="1"/>
        <end position="1203"/>
    </location>
</feature>
<feature type="topological domain" description="Cytoplasmic" evidence="2">
    <location>
        <begin position="1"/>
        <end position="71"/>
    </location>
</feature>
<feature type="transmembrane region" description="Helical" evidence="2">
    <location>
        <begin position="72"/>
        <end position="93"/>
    </location>
</feature>
<feature type="topological domain" description="Extracellular" evidence="2">
    <location>
        <begin position="94"/>
        <end position="97"/>
    </location>
</feature>
<feature type="transmembrane region" description="Helical" evidence="2">
    <location>
        <begin position="98"/>
        <end position="120"/>
    </location>
</feature>
<feature type="topological domain" description="Cytoplasmic" evidence="2">
    <location>
        <begin position="121"/>
        <end position="303"/>
    </location>
</feature>
<feature type="transmembrane region" description="Helical" evidence="2">
    <location>
        <begin position="304"/>
        <end position="325"/>
    </location>
</feature>
<feature type="topological domain" description="Extracellular" evidence="2">
    <location>
        <begin position="326"/>
        <end position="363"/>
    </location>
</feature>
<feature type="transmembrane region" description="Helical" evidence="2">
    <location>
        <begin position="364"/>
        <end position="381"/>
    </location>
</feature>
<feature type="topological domain" description="Cytoplasmic" evidence="2">
    <location>
        <begin position="382"/>
        <end position="921"/>
    </location>
</feature>
<feature type="transmembrane region" description="Helical" evidence="2">
    <location>
        <begin position="922"/>
        <end position="941"/>
    </location>
</feature>
<feature type="topological domain" description="Extracellular" evidence="2">
    <location>
        <begin position="942"/>
        <end position="955"/>
    </location>
</feature>
<feature type="transmembrane region" description="Helical" evidence="2">
    <location>
        <begin position="956"/>
        <end position="975"/>
    </location>
</feature>
<feature type="topological domain" description="Cytoplasmic" evidence="2">
    <location>
        <begin position="976"/>
        <end position="1005"/>
    </location>
</feature>
<feature type="transmembrane region" description="Helical" evidence="2">
    <location>
        <begin position="1006"/>
        <end position="1028"/>
    </location>
</feature>
<feature type="topological domain" description="Extracellular" evidence="2">
    <location>
        <begin position="1029"/>
        <end position="1041"/>
    </location>
</feature>
<feature type="transmembrane region" description="Helical" evidence="2">
    <location>
        <begin position="1042"/>
        <end position="1064"/>
    </location>
</feature>
<feature type="topological domain" description="Cytoplasmic" evidence="2">
    <location>
        <begin position="1065"/>
        <end position="1070"/>
    </location>
</feature>
<feature type="transmembrane region" description="Helical" evidence="2">
    <location>
        <begin position="1071"/>
        <end position="1091"/>
    </location>
</feature>
<feature type="topological domain" description="Extracellular" evidence="2">
    <location>
        <begin position="1092"/>
        <end position="1108"/>
    </location>
</feature>
<feature type="transmembrane region" description="Helical" evidence="2">
    <location>
        <begin position="1109"/>
        <end position="1133"/>
    </location>
</feature>
<feature type="topological domain" description="Cytoplasmic" evidence="2">
    <location>
        <begin position="1134"/>
        <end position="1203"/>
    </location>
</feature>
<feature type="active site" description="4-aspartylphosphate intermediate" evidence="1">
    <location>
        <position position="429"/>
    </location>
</feature>
<feature type="binding site" evidence="1">
    <location>
        <position position="866"/>
    </location>
    <ligand>
        <name>Mg(2+)</name>
        <dbReference type="ChEBI" id="CHEBI:18420"/>
    </ligand>
</feature>
<feature type="binding site" evidence="1">
    <location>
        <position position="870"/>
    </location>
    <ligand>
        <name>Mg(2+)</name>
        <dbReference type="ChEBI" id="CHEBI:18420"/>
    </ligand>
</feature>
<reference key="1">
    <citation type="journal article" date="2000" name="Nature">
        <title>Sequence and analysis of chromosome 1 of the plant Arabidopsis thaliana.</title>
        <authorList>
            <person name="Theologis A."/>
            <person name="Ecker J.R."/>
            <person name="Palm C.J."/>
            <person name="Federspiel N.A."/>
            <person name="Kaul S."/>
            <person name="White O."/>
            <person name="Alonso J."/>
            <person name="Altafi H."/>
            <person name="Araujo R."/>
            <person name="Bowman C.L."/>
            <person name="Brooks S.Y."/>
            <person name="Buehler E."/>
            <person name="Chan A."/>
            <person name="Chao Q."/>
            <person name="Chen H."/>
            <person name="Cheuk R.F."/>
            <person name="Chin C.W."/>
            <person name="Chung M.K."/>
            <person name="Conn L."/>
            <person name="Conway A.B."/>
            <person name="Conway A.R."/>
            <person name="Creasy T.H."/>
            <person name="Dewar K."/>
            <person name="Dunn P."/>
            <person name="Etgu P."/>
            <person name="Feldblyum T.V."/>
            <person name="Feng J.-D."/>
            <person name="Fong B."/>
            <person name="Fujii C.Y."/>
            <person name="Gill J.E."/>
            <person name="Goldsmith A.D."/>
            <person name="Haas B."/>
            <person name="Hansen N.F."/>
            <person name="Hughes B."/>
            <person name="Huizar L."/>
            <person name="Hunter J.L."/>
            <person name="Jenkins J."/>
            <person name="Johnson-Hopson C."/>
            <person name="Khan S."/>
            <person name="Khaykin E."/>
            <person name="Kim C.J."/>
            <person name="Koo H.L."/>
            <person name="Kremenetskaia I."/>
            <person name="Kurtz D.B."/>
            <person name="Kwan A."/>
            <person name="Lam B."/>
            <person name="Langin-Hooper S."/>
            <person name="Lee A."/>
            <person name="Lee J.M."/>
            <person name="Lenz C.A."/>
            <person name="Li J.H."/>
            <person name="Li Y.-P."/>
            <person name="Lin X."/>
            <person name="Liu S.X."/>
            <person name="Liu Z.A."/>
            <person name="Luros J.S."/>
            <person name="Maiti R."/>
            <person name="Marziali A."/>
            <person name="Militscher J."/>
            <person name="Miranda M."/>
            <person name="Nguyen M."/>
            <person name="Nierman W.C."/>
            <person name="Osborne B.I."/>
            <person name="Pai G."/>
            <person name="Peterson J."/>
            <person name="Pham P.K."/>
            <person name="Rizzo M."/>
            <person name="Rooney T."/>
            <person name="Rowley D."/>
            <person name="Sakano H."/>
            <person name="Salzberg S.L."/>
            <person name="Schwartz J.R."/>
            <person name="Shinn P."/>
            <person name="Southwick A.M."/>
            <person name="Sun H."/>
            <person name="Tallon L.J."/>
            <person name="Tambunga G."/>
            <person name="Toriumi M.J."/>
            <person name="Town C.D."/>
            <person name="Utterback T."/>
            <person name="Van Aken S."/>
            <person name="Vaysberg M."/>
            <person name="Vysotskaia V.S."/>
            <person name="Walker M."/>
            <person name="Wu D."/>
            <person name="Yu G."/>
            <person name="Fraser C.M."/>
            <person name="Venter J.C."/>
            <person name="Davis R.W."/>
        </authorList>
    </citation>
    <scope>NUCLEOTIDE SEQUENCE [LARGE SCALE GENOMIC DNA]</scope>
    <source>
        <strain>cv. Columbia</strain>
    </source>
</reference>
<reference key="2">
    <citation type="journal article" date="2017" name="Plant J.">
        <title>Araport11: a complete reannotation of the Arabidopsis thaliana reference genome.</title>
        <authorList>
            <person name="Cheng C.Y."/>
            <person name="Krishnakumar V."/>
            <person name="Chan A.P."/>
            <person name="Thibaud-Nissen F."/>
            <person name="Schobel S."/>
            <person name="Town C.D."/>
        </authorList>
    </citation>
    <scope>GENOME REANNOTATION</scope>
    <source>
        <strain>cv. Columbia</strain>
    </source>
</reference>
<reference key="3">
    <citation type="journal article" date="2003" name="Science">
        <title>Empirical analysis of transcriptional activity in the Arabidopsis genome.</title>
        <authorList>
            <person name="Yamada K."/>
            <person name="Lim J."/>
            <person name="Dale J.M."/>
            <person name="Chen H."/>
            <person name="Shinn P."/>
            <person name="Palm C.J."/>
            <person name="Southwick A.M."/>
            <person name="Wu H.C."/>
            <person name="Kim C.J."/>
            <person name="Nguyen M."/>
            <person name="Pham P.K."/>
            <person name="Cheuk R.F."/>
            <person name="Karlin-Newmann G."/>
            <person name="Liu S.X."/>
            <person name="Lam B."/>
            <person name="Sakano H."/>
            <person name="Wu T."/>
            <person name="Yu G."/>
            <person name="Miranda M."/>
            <person name="Quach H.L."/>
            <person name="Tripp M."/>
            <person name="Chang C.H."/>
            <person name="Lee J.M."/>
            <person name="Toriumi M.J."/>
            <person name="Chan M.M."/>
            <person name="Tang C.C."/>
            <person name="Onodera C.S."/>
            <person name="Deng J.M."/>
            <person name="Akiyama K."/>
            <person name="Ansari Y."/>
            <person name="Arakawa T."/>
            <person name="Banh J."/>
            <person name="Banno F."/>
            <person name="Bowser L."/>
            <person name="Brooks S.Y."/>
            <person name="Carninci P."/>
            <person name="Chao Q."/>
            <person name="Choy N."/>
            <person name="Enju A."/>
            <person name="Goldsmith A.D."/>
            <person name="Gurjal M."/>
            <person name="Hansen N.F."/>
            <person name="Hayashizaki Y."/>
            <person name="Johnson-Hopson C."/>
            <person name="Hsuan V.W."/>
            <person name="Iida K."/>
            <person name="Karnes M."/>
            <person name="Khan S."/>
            <person name="Koesema E."/>
            <person name="Ishida J."/>
            <person name="Jiang P.X."/>
            <person name="Jones T."/>
            <person name="Kawai J."/>
            <person name="Kamiya A."/>
            <person name="Meyers C."/>
            <person name="Nakajima M."/>
            <person name="Narusaka M."/>
            <person name="Seki M."/>
            <person name="Sakurai T."/>
            <person name="Satou M."/>
            <person name="Tamse R."/>
            <person name="Vaysberg M."/>
            <person name="Wallender E.K."/>
            <person name="Wong C."/>
            <person name="Yamamura Y."/>
            <person name="Yuan S."/>
            <person name="Shinozaki K."/>
            <person name="Davis R.W."/>
            <person name="Theologis A."/>
            <person name="Ecker J.R."/>
        </authorList>
    </citation>
    <scope>NUCLEOTIDE SEQUENCE [LARGE SCALE MRNA]</scope>
    <source>
        <strain>cv. Columbia</strain>
    </source>
</reference>
<reference key="4">
    <citation type="journal article" date="2001" name="Plant Physiol.">
        <title>Inventory of the superfamily of P-type ion pumps in Arabidopsis.</title>
        <authorList>
            <person name="Axelsen K.B."/>
            <person name="Palmgren M.G."/>
        </authorList>
    </citation>
    <scope>GENE FAMILY</scope>
    <scope>NOMENCLATURE</scope>
</reference>
<gene>
    <name evidence="3" type="primary">ALA11</name>
    <name evidence="6" type="ordered locus">At1g13210</name>
    <name evidence="7" type="ORF">F3F19.24</name>
</gene>
<accession>Q9SAF5</accession>
<comment type="function">
    <text evidence="5">Involved in transport of phospholipids.</text>
</comment>
<comment type="catalytic activity">
    <reaction evidence="5">
        <text>ATP + H2O + phospholipidSide 1 = ADP + phosphate + phospholipidSide 2.</text>
        <dbReference type="EC" id="7.6.2.1"/>
    </reaction>
</comment>
<comment type="subcellular location">
    <subcellularLocation>
        <location evidence="2">Membrane</location>
        <topology evidence="2">Multi-pass membrane protein</topology>
    </subcellularLocation>
</comment>
<comment type="similarity">
    <text evidence="4">Belongs to the cation transport ATPase (P-type) (TC 3.A.3) family. Type IV subfamily.</text>
</comment>
<keyword id="KW-0067">ATP-binding</keyword>
<keyword id="KW-0460">Magnesium</keyword>
<keyword id="KW-0472">Membrane</keyword>
<keyword id="KW-0479">Metal-binding</keyword>
<keyword id="KW-0547">Nucleotide-binding</keyword>
<keyword id="KW-1185">Reference proteome</keyword>
<keyword id="KW-1278">Translocase</keyword>
<keyword id="KW-0812">Transmembrane</keyword>
<keyword id="KW-1133">Transmembrane helix</keyword>
<evidence type="ECO:0000250" key="1"/>
<evidence type="ECO:0000255" key="2"/>
<evidence type="ECO:0000303" key="3">
    <source>
    </source>
</evidence>
<evidence type="ECO:0000305" key="4"/>
<evidence type="ECO:0000305" key="5">
    <source>
    </source>
</evidence>
<evidence type="ECO:0000312" key="6">
    <source>
        <dbReference type="Araport" id="AT1G13210"/>
    </source>
</evidence>
<evidence type="ECO:0000312" key="7">
    <source>
        <dbReference type="EMBL" id="AAD31074.1"/>
    </source>
</evidence>